<feature type="chain" id="PRO_0000422886" description="Zinc metalloproteinase-disintegrin-like">
    <location>
        <begin position="1"/>
        <end position="15" status="greater than"/>
    </location>
</feature>
<feature type="domain" description="Peptidase M12B" evidence="2">
    <location>
        <begin position="14"/>
        <end position="15" status="greater than"/>
    </location>
</feature>
<feature type="non-terminal residue">
    <location>
        <position position="15"/>
    </location>
</feature>
<proteinExistence type="evidence at protein level"/>
<organism>
    <name type="scientific">Micrurus corallinus</name>
    <name type="common">Brazilian coral snake</name>
    <dbReference type="NCBI Taxonomy" id="54390"/>
    <lineage>
        <taxon>Eukaryota</taxon>
        <taxon>Metazoa</taxon>
        <taxon>Chordata</taxon>
        <taxon>Craniata</taxon>
        <taxon>Vertebrata</taxon>
        <taxon>Euteleostomi</taxon>
        <taxon>Lepidosauria</taxon>
        <taxon>Squamata</taxon>
        <taxon>Bifurcata</taxon>
        <taxon>Unidentata</taxon>
        <taxon>Episquamata</taxon>
        <taxon>Toxicofera</taxon>
        <taxon>Serpentes</taxon>
        <taxon>Colubroidea</taxon>
        <taxon>Elapidae</taxon>
        <taxon>Elapinae</taxon>
        <taxon>Micrurus</taxon>
    </lineage>
</organism>
<dbReference type="EC" id="3.4.24.-"/>
<dbReference type="GO" id="GO:0005576">
    <property type="term" value="C:extracellular region"/>
    <property type="evidence" value="ECO:0007669"/>
    <property type="project" value="UniProtKB-SubCell"/>
</dbReference>
<dbReference type="GO" id="GO:0046872">
    <property type="term" value="F:metal ion binding"/>
    <property type="evidence" value="ECO:0007669"/>
    <property type="project" value="UniProtKB-KW"/>
</dbReference>
<dbReference type="GO" id="GO:0008237">
    <property type="term" value="F:metallopeptidase activity"/>
    <property type="evidence" value="ECO:0007669"/>
    <property type="project" value="UniProtKB-KW"/>
</dbReference>
<dbReference type="GO" id="GO:0090729">
    <property type="term" value="F:toxin activity"/>
    <property type="evidence" value="ECO:0007669"/>
    <property type="project" value="UniProtKB-KW"/>
</dbReference>
<dbReference type="GO" id="GO:0006508">
    <property type="term" value="P:proteolysis"/>
    <property type="evidence" value="ECO:0007669"/>
    <property type="project" value="UniProtKB-KW"/>
</dbReference>
<evidence type="ECO:0000250" key="1"/>
<evidence type="ECO:0000255" key="2">
    <source>
        <dbReference type="PROSITE-ProRule" id="PRU00276"/>
    </source>
</evidence>
<evidence type="ECO:0000305" key="3"/>
<accession>P0DM46</accession>
<comment type="function">
    <text evidence="1">Snake venom metalloproteinase that impairs hemostasis in the envenomed animal.</text>
</comment>
<comment type="cofactor">
    <cofactor evidence="1">
        <name>Zn(2+)</name>
        <dbReference type="ChEBI" id="CHEBI:29105"/>
    </cofactor>
    <text evidence="1">Binds 1 zinc ion per subunit.</text>
</comment>
<comment type="subunit">
    <text evidence="1">Monomer.</text>
</comment>
<comment type="subcellular location">
    <subcellularLocation>
        <location>Secreted</location>
    </subcellularLocation>
</comment>
<comment type="tissue specificity">
    <text>Expressed by the venom gland.</text>
</comment>
<comment type="PTM">
    <text evidence="1">Contains 16 disulfide bonds.</text>
</comment>
<comment type="similarity">
    <text evidence="3">Belongs to the venom metalloproteinase (M12B) family. P-III subfamily. P-IIIa sub-subfamily.</text>
</comment>
<protein>
    <recommendedName>
        <fullName>Zinc metalloproteinase-disintegrin-like</fullName>
        <ecNumber>3.4.24.-</ecNumber>
    </recommendedName>
    <alternativeName>
        <fullName>Snake venom metalloproteinase</fullName>
        <shortName>SVMP</shortName>
    </alternativeName>
</protein>
<sequence length="15" mass="1868">TVTPEQDRYLQVKKY</sequence>
<name>VM3A_MICCO</name>
<keyword id="KW-0903">Direct protein sequencing</keyword>
<keyword id="KW-1015">Disulfide bond</keyword>
<keyword id="KW-1199">Hemostasis impairing toxin</keyword>
<keyword id="KW-0378">Hydrolase</keyword>
<keyword id="KW-0479">Metal-binding</keyword>
<keyword id="KW-0482">Metalloprotease</keyword>
<keyword id="KW-0645">Protease</keyword>
<keyword id="KW-0964">Secreted</keyword>
<keyword id="KW-0800">Toxin</keyword>
<keyword id="KW-0862">Zinc</keyword>
<reference key="1">
    <citation type="journal article" date="2011" name="J. Proteomics">
        <title>Snake venomics and venom gland transcriptomic analysis of Brazilian coral snakes, Micrurus altirostris and M. corallinus.</title>
        <authorList>
            <person name="Correa-Netto C."/>
            <person name="Junqueira-de-Azevedo Ide L."/>
            <person name="Silva D.A."/>
            <person name="Ho P.L."/>
            <person name="Leitao-de-Araujo M."/>
            <person name="Alves M.L."/>
            <person name="Sanz L."/>
            <person name="Foguel D."/>
            <person name="Zingali R.B."/>
            <person name="Calvete J.J."/>
        </authorList>
    </citation>
    <scope>PROTEIN SEQUENCE</scope>
    <source>
        <tissue>Venom</tissue>
    </source>
</reference>